<evidence type="ECO:0000255" key="1">
    <source>
        <dbReference type="HAMAP-Rule" id="MF_00480"/>
    </source>
</evidence>
<evidence type="ECO:0000305" key="2"/>
<organism>
    <name type="scientific">Herpetosiphon aurantiacus (strain ATCC 23779 / DSM 785 / 114-95)</name>
    <dbReference type="NCBI Taxonomy" id="316274"/>
    <lineage>
        <taxon>Bacteria</taxon>
        <taxon>Bacillati</taxon>
        <taxon>Chloroflexota</taxon>
        <taxon>Chloroflexia</taxon>
        <taxon>Herpetosiphonales</taxon>
        <taxon>Herpetosiphonaceae</taxon>
        <taxon>Herpetosiphon</taxon>
    </lineage>
</organism>
<keyword id="KW-0687">Ribonucleoprotein</keyword>
<keyword id="KW-0689">Ribosomal protein</keyword>
<keyword id="KW-0694">RNA-binding</keyword>
<keyword id="KW-0699">rRNA-binding</keyword>
<keyword id="KW-0820">tRNA-binding</keyword>
<gene>
    <name evidence="1" type="primary">rpsG</name>
    <name type="ordered locus">Haur_3276</name>
</gene>
<name>RS7_HERA2</name>
<feature type="chain" id="PRO_0000344296" description="Small ribosomal subunit protein uS7">
    <location>
        <begin position="1"/>
        <end position="157"/>
    </location>
</feature>
<sequence>MPRRRKIAKRIVPGDPIHNSIHVQMLINKVMMHGKKSVAENIVYRALDVAAQRLNREPVDLFEQVLRNSSPTIEVRPKRVGGSTYQVPVEVKSDRRIALAIRWLLTAARGRSGKPMHERLALELVDAFNNTGATVKRREEVHRMAEANRAFSHYARF</sequence>
<dbReference type="EMBL" id="CP000875">
    <property type="protein sequence ID" value="ABX05913.1"/>
    <property type="molecule type" value="Genomic_DNA"/>
</dbReference>
<dbReference type="SMR" id="A9B745"/>
<dbReference type="FunCoup" id="A9B745">
    <property type="interactions" value="514"/>
</dbReference>
<dbReference type="STRING" id="316274.Haur_3276"/>
<dbReference type="KEGG" id="hau:Haur_3276"/>
<dbReference type="eggNOG" id="COG0049">
    <property type="taxonomic scope" value="Bacteria"/>
</dbReference>
<dbReference type="HOGENOM" id="CLU_072226_1_1_0"/>
<dbReference type="InParanoid" id="A9B745"/>
<dbReference type="Proteomes" id="UP000000787">
    <property type="component" value="Chromosome"/>
</dbReference>
<dbReference type="GO" id="GO:0015935">
    <property type="term" value="C:small ribosomal subunit"/>
    <property type="evidence" value="ECO:0007669"/>
    <property type="project" value="InterPro"/>
</dbReference>
<dbReference type="GO" id="GO:0019843">
    <property type="term" value="F:rRNA binding"/>
    <property type="evidence" value="ECO:0007669"/>
    <property type="project" value="UniProtKB-UniRule"/>
</dbReference>
<dbReference type="GO" id="GO:0003735">
    <property type="term" value="F:structural constituent of ribosome"/>
    <property type="evidence" value="ECO:0007669"/>
    <property type="project" value="InterPro"/>
</dbReference>
<dbReference type="GO" id="GO:0000049">
    <property type="term" value="F:tRNA binding"/>
    <property type="evidence" value="ECO:0007669"/>
    <property type="project" value="UniProtKB-UniRule"/>
</dbReference>
<dbReference type="GO" id="GO:0006412">
    <property type="term" value="P:translation"/>
    <property type="evidence" value="ECO:0007669"/>
    <property type="project" value="UniProtKB-UniRule"/>
</dbReference>
<dbReference type="CDD" id="cd14869">
    <property type="entry name" value="uS7_Bacteria"/>
    <property type="match status" value="1"/>
</dbReference>
<dbReference type="FunFam" id="1.10.455.10:FF:000001">
    <property type="entry name" value="30S ribosomal protein S7"/>
    <property type="match status" value="1"/>
</dbReference>
<dbReference type="Gene3D" id="1.10.455.10">
    <property type="entry name" value="Ribosomal protein S7 domain"/>
    <property type="match status" value="1"/>
</dbReference>
<dbReference type="HAMAP" id="MF_00480_B">
    <property type="entry name" value="Ribosomal_uS7_B"/>
    <property type="match status" value="1"/>
</dbReference>
<dbReference type="InterPro" id="IPR000235">
    <property type="entry name" value="Ribosomal_uS7"/>
</dbReference>
<dbReference type="InterPro" id="IPR005717">
    <property type="entry name" value="Ribosomal_uS7_bac/org-type"/>
</dbReference>
<dbReference type="InterPro" id="IPR023798">
    <property type="entry name" value="Ribosomal_uS7_dom"/>
</dbReference>
<dbReference type="InterPro" id="IPR036823">
    <property type="entry name" value="Ribosomal_uS7_dom_sf"/>
</dbReference>
<dbReference type="NCBIfam" id="TIGR01029">
    <property type="entry name" value="rpsG_bact"/>
    <property type="match status" value="1"/>
</dbReference>
<dbReference type="PANTHER" id="PTHR11205">
    <property type="entry name" value="RIBOSOMAL PROTEIN S7"/>
    <property type="match status" value="1"/>
</dbReference>
<dbReference type="Pfam" id="PF00177">
    <property type="entry name" value="Ribosomal_S7"/>
    <property type="match status" value="1"/>
</dbReference>
<dbReference type="PIRSF" id="PIRSF002122">
    <property type="entry name" value="RPS7p_RPS7a_RPS5e_RPS7o"/>
    <property type="match status" value="1"/>
</dbReference>
<dbReference type="SUPFAM" id="SSF47973">
    <property type="entry name" value="Ribosomal protein S7"/>
    <property type="match status" value="1"/>
</dbReference>
<comment type="function">
    <text evidence="1">One of the primary rRNA binding proteins, it binds directly to 16S rRNA where it nucleates assembly of the head domain of the 30S subunit. Is located at the subunit interface close to the decoding center, probably blocks exit of the E-site tRNA.</text>
</comment>
<comment type="subunit">
    <text evidence="1">Part of the 30S ribosomal subunit. Contacts proteins S9 and S11.</text>
</comment>
<comment type="similarity">
    <text evidence="1">Belongs to the universal ribosomal protein uS7 family.</text>
</comment>
<accession>A9B745</accession>
<reference key="1">
    <citation type="journal article" date="2011" name="Stand. Genomic Sci.">
        <title>Complete genome sequence of the filamentous gliding predatory bacterium Herpetosiphon aurantiacus type strain (114-95(T)).</title>
        <authorList>
            <person name="Kiss H."/>
            <person name="Nett M."/>
            <person name="Domin N."/>
            <person name="Martin K."/>
            <person name="Maresca J.A."/>
            <person name="Copeland A."/>
            <person name="Lapidus A."/>
            <person name="Lucas S."/>
            <person name="Berry K.W."/>
            <person name="Glavina Del Rio T."/>
            <person name="Dalin E."/>
            <person name="Tice H."/>
            <person name="Pitluck S."/>
            <person name="Richardson P."/>
            <person name="Bruce D."/>
            <person name="Goodwin L."/>
            <person name="Han C."/>
            <person name="Detter J.C."/>
            <person name="Schmutz J."/>
            <person name="Brettin T."/>
            <person name="Land M."/>
            <person name="Hauser L."/>
            <person name="Kyrpides N.C."/>
            <person name="Ivanova N."/>
            <person name="Goeker M."/>
            <person name="Woyke T."/>
            <person name="Klenk H.P."/>
            <person name="Bryant D.A."/>
        </authorList>
    </citation>
    <scope>NUCLEOTIDE SEQUENCE [LARGE SCALE GENOMIC DNA]</scope>
    <source>
        <strain>ATCC 23779 / DSM 785 / 114-95</strain>
    </source>
</reference>
<protein>
    <recommendedName>
        <fullName evidence="1">Small ribosomal subunit protein uS7</fullName>
    </recommendedName>
    <alternativeName>
        <fullName evidence="2">30S ribosomal protein S7</fullName>
    </alternativeName>
</protein>
<proteinExistence type="inferred from homology"/>